<protein>
    <recommendedName>
        <fullName evidence="5">Phosphomannomutase</fullName>
        <shortName evidence="5">LePMM</shortName>
        <ecNumber evidence="7">5.4.2.8</ecNumber>
    </recommendedName>
</protein>
<reference key="1">
    <citation type="journal article" date="2007" name="Plant J.">
        <title>Molecular and functional analysis of phosphomannomutase (PMM) from higher plants and genetic evidence for the involvement of PMM in ascorbic acid biosynthesis in Arabidopsis and Nicotiana benthamiana.</title>
        <authorList>
            <person name="Qian W."/>
            <person name="Yu C."/>
            <person name="Qin H."/>
            <person name="Liu X."/>
            <person name="Zhang A."/>
            <person name="Johansen I.E."/>
            <person name="Wang D."/>
        </authorList>
    </citation>
    <scope>NUCLEOTIDE SEQUENCE [MRNA]</scope>
    <scope>FUNCTION</scope>
    <scope>CATALYTIC ACTIVITY</scope>
</reference>
<name>PMM_SOLLC</name>
<feature type="chain" id="PRO_0000326494" description="Phosphomannomutase">
    <location>
        <begin position="1"/>
        <end position="252"/>
    </location>
</feature>
<feature type="active site" description="Nucleophile" evidence="3">
    <location>
        <position position="13"/>
    </location>
</feature>
<feature type="active site" description="Proton donor/acceptor" evidence="3">
    <location>
        <position position="15"/>
    </location>
</feature>
<feature type="binding site" evidence="3">
    <location>
        <position position="13"/>
    </location>
    <ligand>
        <name>Mg(2+)</name>
        <dbReference type="ChEBI" id="CHEBI:18420"/>
        <label>1</label>
    </ligand>
</feature>
<feature type="binding site" evidence="3">
    <location>
        <position position="15"/>
    </location>
    <ligand>
        <name>Mg(2+)</name>
        <dbReference type="ChEBI" id="CHEBI:18420"/>
        <label>1</label>
    </ligand>
</feature>
<feature type="binding site" evidence="3">
    <location>
        <position position="22"/>
    </location>
    <ligand>
        <name>alpha-D-mannose 1-phosphate</name>
        <dbReference type="ChEBI" id="CHEBI:58409"/>
    </ligand>
</feature>
<feature type="binding site" evidence="3">
    <location>
        <position position="124"/>
    </location>
    <ligand>
        <name>alpha-D-mannose 1-phosphate</name>
        <dbReference type="ChEBI" id="CHEBI:58409"/>
    </ligand>
</feature>
<feature type="binding site" evidence="3">
    <location>
        <position position="135"/>
    </location>
    <ligand>
        <name>alpha-D-mannose 1-phosphate</name>
        <dbReference type="ChEBI" id="CHEBI:58409"/>
    </ligand>
</feature>
<feature type="binding site" evidence="3">
    <location>
        <position position="142"/>
    </location>
    <ligand>
        <name>alpha-D-mannose 1-phosphate</name>
        <dbReference type="ChEBI" id="CHEBI:58409"/>
    </ligand>
</feature>
<feature type="binding site" evidence="3">
    <location>
        <position position="180"/>
    </location>
    <ligand>
        <name>alpha-D-mannose 1-phosphate</name>
        <dbReference type="ChEBI" id="CHEBI:58409"/>
    </ligand>
</feature>
<feature type="binding site" evidence="3">
    <location>
        <position position="182"/>
    </location>
    <ligand>
        <name>alpha-D-mannose 1-phosphate</name>
        <dbReference type="ChEBI" id="CHEBI:58409"/>
    </ligand>
</feature>
<feature type="binding site" evidence="2">
    <location>
        <position position="208"/>
    </location>
    <ligand>
        <name>Mg(2+)</name>
        <dbReference type="ChEBI" id="CHEBI:18420"/>
        <label>1</label>
    </ligand>
</feature>
<feature type="binding site" evidence="2">
    <location>
        <position position="220"/>
    </location>
    <ligand>
        <name>Mg(2+)</name>
        <dbReference type="ChEBI" id="CHEBI:18420"/>
        <label>2</label>
    </ligand>
</feature>
<feature type="binding site" evidence="3">
    <location>
        <position position="225"/>
    </location>
    <ligand>
        <name>Mg(2+)</name>
        <dbReference type="ChEBI" id="CHEBI:18420"/>
        <label>2</label>
    </ligand>
</feature>
<proteinExistence type="evidence at protein level"/>
<organism>
    <name type="scientific">Solanum lycopersicum</name>
    <name type="common">Tomato</name>
    <name type="synonym">Lycopersicon esculentum</name>
    <dbReference type="NCBI Taxonomy" id="4081"/>
    <lineage>
        <taxon>Eukaryota</taxon>
        <taxon>Viridiplantae</taxon>
        <taxon>Streptophyta</taxon>
        <taxon>Embryophyta</taxon>
        <taxon>Tracheophyta</taxon>
        <taxon>Spermatophyta</taxon>
        <taxon>Magnoliopsida</taxon>
        <taxon>eudicotyledons</taxon>
        <taxon>Gunneridae</taxon>
        <taxon>Pentapetalae</taxon>
        <taxon>asterids</taxon>
        <taxon>lamiids</taxon>
        <taxon>Solanales</taxon>
        <taxon>Solanaceae</taxon>
        <taxon>Solanoideae</taxon>
        <taxon>Solaneae</taxon>
        <taxon>Solanum</taxon>
        <taxon>Solanum subgen. Lycopersicon</taxon>
    </lineage>
</organism>
<keyword id="KW-0963">Cytoplasm</keyword>
<keyword id="KW-0413">Isomerase</keyword>
<keyword id="KW-0460">Magnesium</keyword>
<keyword id="KW-0479">Metal-binding</keyword>
<keyword id="KW-1185">Reference proteome</keyword>
<sequence length="252" mass="28556">MAARKAGLIALFDVDGTLTAPRKESTPQMLKFMQELRKVVTVGVVGGSDLVKISEQLGNTVTNDYDYVFSENGLVAHKDGKLIGKQSLKSHLGDEKLKEFINFTLHYIADLDIPIKRGTFIEFRSGMLNVSPIGRNCSQEERDEFEKYDKVQKIRETMVSVLREKFAHFNLTFSIGGQISFDVFPQGWDKTYCLRYLEEFNEIHFFGDKTYKGGNDHEIYESERTVGHTVTSPEETLKQCSVLFLGKDNGSS</sequence>
<evidence type="ECO:0000250" key="1">
    <source>
        <dbReference type="UniProtKB" id="A0A0U1WZ18"/>
    </source>
</evidence>
<evidence type="ECO:0000250" key="2">
    <source>
        <dbReference type="UniProtKB" id="P31353"/>
    </source>
</evidence>
<evidence type="ECO:0000250" key="3">
    <source>
        <dbReference type="UniProtKB" id="Q92871"/>
    </source>
</evidence>
<evidence type="ECO:0000269" key="4">
    <source>
    </source>
</evidence>
<evidence type="ECO:0000303" key="5">
    <source>
    </source>
</evidence>
<evidence type="ECO:0000305" key="6"/>
<evidence type="ECO:0000305" key="7">
    <source>
    </source>
</evidence>
<gene>
    <name evidence="5" type="primary">PMM</name>
</gene>
<comment type="function">
    <text evidence="4 6 7">Catalyzes the interconversion of mannose-6-phosphate to mannose-1-phosphate, the precursor for the synthesis of GDP-mannose (Probable). GDP-mannose is an essential sugar nucleotide for the synthesis of D-mannose-containing cell wall polysaccharides (galactomannans and glucomannans), glycolipids, glycoproteins and the antioxidant L-ascorbate (Probable). Can complement the yeast temperature-sensitive mutant sec53-6 (PubMed:17217471).</text>
</comment>
<comment type="catalytic activity">
    <reaction>
        <text>alpha-D-mannose 1-phosphate = D-mannose 6-phosphate</text>
        <dbReference type="Rhea" id="RHEA:11140"/>
        <dbReference type="ChEBI" id="CHEBI:58409"/>
        <dbReference type="ChEBI" id="CHEBI:58735"/>
        <dbReference type="EC" id="5.4.2.8"/>
    </reaction>
</comment>
<comment type="cofactor">
    <cofactor evidence="3">
        <name>Mg(2+)</name>
        <dbReference type="ChEBI" id="CHEBI:18420"/>
    </cofactor>
</comment>
<comment type="pathway">
    <text>Nucleotide-sugar biosynthesis; GDP-alpha-D-mannose biosynthesis; alpha-D-mannose 1-phosphate from D-fructose 6-phosphate: step 2/2.</text>
</comment>
<comment type="subunit">
    <text evidence="3">Homodimer.</text>
</comment>
<comment type="subcellular location">
    <subcellularLocation>
        <location evidence="1">Cytoplasm</location>
    </subcellularLocation>
</comment>
<comment type="similarity">
    <text evidence="6">Belongs to the eukaryotic PMM family.</text>
</comment>
<dbReference type="EC" id="5.4.2.8" evidence="7"/>
<dbReference type="EMBL" id="DQ442993">
    <property type="protein sequence ID" value="ABD97872.1"/>
    <property type="molecule type" value="mRNA"/>
</dbReference>
<dbReference type="SMR" id="Q1W377"/>
<dbReference type="FunCoup" id="Q1W377">
    <property type="interactions" value="3206"/>
</dbReference>
<dbReference type="STRING" id="4081.Q1W377"/>
<dbReference type="PaxDb" id="4081-Solyc08g008670.2.1"/>
<dbReference type="eggNOG" id="KOG3189">
    <property type="taxonomic scope" value="Eukaryota"/>
</dbReference>
<dbReference type="InParanoid" id="Q1W377"/>
<dbReference type="UniPathway" id="UPA00126">
    <property type="reaction ID" value="UER00424"/>
</dbReference>
<dbReference type="Proteomes" id="UP000004994">
    <property type="component" value="Unplaced"/>
</dbReference>
<dbReference type="ExpressionAtlas" id="Q1W377">
    <property type="expression patterns" value="baseline and differential"/>
</dbReference>
<dbReference type="GO" id="GO:0005829">
    <property type="term" value="C:cytosol"/>
    <property type="evidence" value="ECO:0000318"/>
    <property type="project" value="GO_Central"/>
</dbReference>
<dbReference type="GO" id="GO:0046872">
    <property type="term" value="F:metal ion binding"/>
    <property type="evidence" value="ECO:0007669"/>
    <property type="project" value="UniProtKB-KW"/>
</dbReference>
<dbReference type="GO" id="GO:0004615">
    <property type="term" value="F:phosphomannomutase activity"/>
    <property type="evidence" value="ECO:0000318"/>
    <property type="project" value="GO_Central"/>
</dbReference>
<dbReference type="GO" id="GO:0009298">
    <property type="term" value="P:GDP-mannose biosynthetic process"/>
    <property type="evidence" value="ECO:0007669"/>
    <property type="project" value="UniProtKB-UniPathway"/>
</dbReference>
<dbReference type="GO" id="GO:0006013">
    <property type="term" value="P:mannose metabolic process"/>
    <property type="evidence" value="ECO:0000318"/>
    <property type="project" value="GO_Central"/>
</dbReference>
<dbReference type="GO" id="GO:0006487">
    <property type="term" value="P:protein N-linked glycosylation"/>
    <property type="evidence" value="ECO:0000318"/>
    <property type="project" value="GO_Central"/>
</dbReference>
<dbReference type="CDD" id="cd02585">
    <property type="entry name" value="HAD_PMM"/>
    <property type="match status" value="1"/>
</dbReference>
<dbReference type="FunFam" id="3.30.1240.20:FF:000001">
    <property type="entry name" value="Phosphomannomutase"/>
    <property type="match status" value="1"/>
</dbReference>
<dbReference type="Gene3D" id="3.30.1240.20">
    <property type="match status" value="1"/>
</dbReference>
<dbReference type="Gene3D" id="3.40.50.1000">
    <property type="entry name" value="HAD superfamily/HAD-like"/>
    <property type="match status" value="1"/>
</dbReference>
<dbReference type="InterPro" id="IPR036412">
    <property type="entry name" value="HAD-like_sf"/>
</dbReference>
<dbReference type="InterPro" id="IPR006379">
    <property type="entry name" value="HAD-SF_hydro_IIB"/>
</dbReference>
<dbReference type="InterPro" id="IPR023214">
    <property type="entry name" value="HAD_sf"/>
</dbReference>
<dbReference type="InterPro" id="IPR005002">
    <property type="entry name" value="PMM"/>
</dbReference>
<dbReference type="InterPro" id="IPR043169">
    <property type="entry name" value="PMM_cap"/>
</dbReference>
<dbReference type="NCBIfam" id="TIGR01484">
    <property type="entry name" value="HAD-SF-IIB"/>
    <property type="match status" value="1"/>
</dbReference>
<dbReference type="PANTHER" id="PTHR10466">
    <property type="entry name" value="PHOSPHOMANNOMUTASE"/>
    <property type="match status" value="1"/>
</dbReference>
<dbReference type="PANTHER" id="PTHR10466:SF0">
    <property type="entry name" value="PHOSPHOMANNOMUTASE"/>
    <property type="match status" value="1"/>
</dbReference>
<dbReference type="Pfam" id="PF03332">
    <property type="entry name" value="PMM"/>
    <property type="match status" value="1"/>
</dbReference>
<dbReference type="SFLD" id="SFLDF00445">
    <property type="entry name" value="alpha-phosphomannomutase"/>
    <property type="match status" value="1"/>
</dbReference>
<dbReference type="SFLD" id="SFLDG01140">
    <property type="entry name" value="C2.B:_Phosphomannomutase_and_P"/>
    <property type="match status" value="1"/>
</dbReference>
<dbReference type="SUPFAM" id="SSF56784">
    <property type="entry name" value="HAD-like"/>
    <property type="match status" value="1"/>
</dbReference>
<accession>Q1W377</accession>